<feature type="chain" id="PRO_0000315913" description="Germin-like protein 4">
    <location>
        <begin position="1" status="less than"/>
        <end position="11" status="greater than"/>
    </location>
</feature>
<feature type="unsure residue" description="F or M">
    <location>
        <position position="2"/>
    </location>
</feature>
<feature type="unsure residue" description="F or M">
    <location>
        <position position="3"/>
    </location>
</feature>
<feature type="unsure residue" description="F or M">
    <location>
        <position position="4"/>
    </location>
</feature>
<feature type="unsure residue" description="Q or K">
    <location>
        <position position="5"/>
    </location>
</feature>
<feature type="unsure residue" description="L or I">
    <location>
        <position position="7"/>
    </location>
</feature>
<feature type="non-terminal residue">
    <location>
        <position position="1"/>
    </location>
</feature>
<feature type="non-terminal residue">
    <location>
        <position position="11"/>
    </location>
</feature>
<sequence length="11" mass="1341">DFFFQGLNTPR</sequence>
<accession>P85354</accession>
<comment type="function">
    <text evidence="1">May play a role in plant defense. Probably has no oxalate oxidase activity even if the active site is conserved (By similarity).</text>
</comment>
<comment type="subunit">
    <text evidence="2">Oligomer (believed to be a pentamer but probably hexamer).</text>
</comment>
<comment type="subcellular location">
    <subcellularLocation>
        <location evidence="2">Secreted</location>
        <location evidence="2">Extracellular space</location>
        <location evidence="2">Apoplast</location>
    </subcellularLocation>
</comment>
<comment type="similarity">
    <text evidence="3">Belongs to the germin family.</text>
</comment>
<proteinExistence type="evidence at protein level"/>
<dbReference type="GO" id="GO:0048046">
    <property type="term" value="C:apoplast"/>
    <property type="evidence" value="ECO:0007669"/>
    <property type="project" value="UniProtKB-SubCell"/>
</dbReference>
<dbReference type="GO" id="GO:0046872">
    <property type="term" value="F:metal ion binding"/>
    <property type="evidence" value="ECO:0007669"/>
    <property type="project" value="UniProtKB-KW"/>
</dbReference>
<reference key="1">
    <citation type="journal article" date="2009" name="Physiol. Plantarum">
        <title>The presence of sinapyl lignin in Ginkgo biloba cell cultures changes our views of the evolution of lignin biosynthesis.</title>
        <authorList>
            <person name="Novo Uzal E."/>
            <person name="Gomez Ros L.V."/>
            <person name="Pomar F."/>
            <person name="Bernal M.A."/>
            <person name="Paradela A."/>
            <person name="Albar J.P."/>
            <person name="Ros Barcelo A."/>
        </authorList>
    </citation>
    <scope>PROTEIN SEQUENCE</scope>
    <source>
        <strain>PC-1121</strain>
        <tissue>Callus</tissue>
    </source>
</reference>
<keyword id="KW-0052">Apoplast</keyword>
<keyword id="KW-0903">Direct protein sequencing</keyword>
<keyword id="KW-0464">Manganese</keyword>
<keyword id="KW-0479">Metal-binding</keyword>
<keyword id="KW-0964">Secreted</keyword>
<organism>
    <name type="scientific">Betula pendula</name>
    <name type="common">European white birch</name>
    <name type="synonym">Betula verrucosa</name>
    <dbReference type="NCBI Taxonomy" id="3505"/>
    <lineage>
        <taxon>Eukaryota</taxon>
        <taxon>Viridiplantae</taxon>
        <taxon>Streptophyta</taxon>
        <taxon>Embryophyta</taxon>
        <taxon>Tracheophyta</taxon>
        <taxon>Spermatophyta</taxon>
        <taxon>Magnoliopsida</taxon>
        <taxon>eudicotyledons</taxon>
        <taxon>Gunneridae</taxon>
        <taxon>Pentapetalae</taxon>
        <taxon>rosids</taxon>
        <taxon>fabids</taxon>
        <taxon>Fagales</taxon>
        <taxon>Betulaceae</taxon>
        <taxon>Betula</taxon>
    </lineage>
</organism>
<protein>
    <recommendedName>
        <fullName>Germin-like protein 4</fullName>
    </recommendedName>
</protein>
<name>GLP4_BETPN</name>
<evidence type="ECO:0000250" key="1"/>
<evidence type="ECO:0000250" key="2">
    <source>
        <dbReference type="UniProtKB" id="P92996"/>
    </source>
</evidence>
<evidence type="ECO:0000255" key="3"/>